<reference key="1">
    <citation type="journal article" date="1996" name="Glycobiology">
        <title>Cloning and analysis of the MNN4 gene required for phosphorylation of N-linked oligosaccharides in Saccharomyces cerevisiae.</title>
        <authorList>
            <person name="Odani T."/>
            <person name="Shimma Y."/>
            <person name="Tanaka A."/>
            <person name="Jigami Y."/>
        </authorList>
    </citation>
    <scope>NUCLEOTIDE SEQUENCE [GENOMIC DNA]</scope>
    <scope>FUNCTION</scope>
    <scope>DISRUPTION PHENOTYPE</scope>
    <source>
        <strain>ATCC 204508 / S288c</strain>
    </source>
</reference>
<reference key="2">
    <citation type="journal article" date="1994" name="Nature">
        <title>Complete DNA sequence of yeast chromosome XI.</title>
        <authorList>
            <person name="Dujon B."/>
            <person name="Alexandraki D."/>
            <person name="Andre B."/>
            <person name="Ansorge W."/>
            <person name="Baladron V."/>
            <person name="Ballesta J.P.G."/>
            <person name="Banrevi A."/>
            <person name="Bolle P.-A."/>
            <person name="Bolotin-Fukuhara M."/>
            <person name="Bossier P."/>
            <person name="Bou G."/>
            <person name="Boyer J."/>
            <person name="Buitrago M.J."/>
            <person name="Cheret G."/>
            <person name="Colleaux L."/>
            <person name="Daignan-Fornier B."/>
            <person name="del Rey F."/>
            <person name="Dion C."/>
            <person name="Domdey H."/>
            <person name="Duesterhoeft A."/>
            <person name="Duesterhus S."/>
            <person name="Entian K.-D."/>
            <person name="Erfle H."/>
            <person name="Esteban P.F."/>
            <person name="Feldmann H."/>
            <person name="Fernandes L."/>
            <person name="Fobo G.M."/>
            <person name="Fritz C."/>
            <person name="Fukuhara H."/>
            <person name="Gabel C."/>
            <person name="Gaillon L."/>
            <person name="Garcia-Cantalejo J.M."/>
            <person name="Garcia-Ramirez J.J."/>
            <person name="Gent M.E."/>
            <person name="Ghazvini M."/>
            <person name="Goffeau A."/>
            <person name="Gonzalez A."/>
            <person name="Grothues D."/>
            <person name="Guerreiro P."/>
            <person name="Hegemann J.H."/>
            <person name="Hewitt N."/>
            <person name="Hilger F."/>
            <person name="Hollenberg C.P."/>
            <person name="Horaitis O."/>
            <person name="Indge K.J."/>
            <person name="Jacquier A."/>
            <person name="James C.M."/>
            <person name="Jauniaux J.-C."/>
            <person name="Jimenez A."/>
            <person name="Keuchel H."/>
            <person name="Kirchrath L."/>
            <person name="Kleine K."/>
            <person name="Koetter P."/>
            <person name="Legrain P."/>
            <person name="Liebl S."/>
            <person name="Louis E.J."/>
            <person name="Maia e Silva A."/>
            <person name="Marck C."/>
            <person name="Monnier A.-L."/>
            <person name="Moestl D."/>
            <person name="Mueller S."/>
            <person name="Obermaier B."/>
            <person name="Oliver S.G."/>
            <person name="Pallier C."/>
            <person name="Pascolo S."/>
            <person name="Pfeiffer F."/>
            <person name="Philippsen P."/>
            <person name="Planta R.J."/>
            <person name="Pohl F.M."/>
            <person name="Pohl T.M."/>
            <person name="Poehlmann R."/>
            <person name="Portetelle D."/>
            <person name="Purnelle B."/>
            <person name="Puzos V."/>
            <person name="Ramezani Rad M."/>
            <person name="Rasmussen S.W."/>
            <person name="Remacha M.A."/>
            <person name="Revuelta J.L."/>
            <person name="Richard G.-F."/>
            <person name="Rieger M."/>
            <person name="Rodrigues-Pousada C."/>
            <person name="Rose M."/>
            <person name="Rupp T."/>
            <person name="Santos M.A."/>
            <person name="Schwager C."/>
            <person name="Sensen C."/>
            <person name="Skala J."/>
            <person name="Soares H."/>
            <person name="Sor F."/>
            <person name="Stegemann J."/>
            <person name="Tettelin H."/>
            <person name="Thierry A."/>
            <person name="Tzermia M."/>
            <person name="Urrestarazu L.A."/>
            <person name="van Dyck L."/>
            <person name="van Vliet-Reedijk J.C."/>
            <person name="Valens M."/>
            <person name="Vandenbol M."/>
            <person name="Vilela C."/>
            <person name="Vissers S."/>
            <person name="von Wettstein D."/>
            <person name="Voss H."/>
            <person name="Wiemann S."/>
            <person name="Xu G."/>
            <person name="Zimmermann J."/>
            <person name="Haasemann M."/>
            <person name="Becker I."/>
            <person name="Mewes H.-W."/>
        </authorList>
    </citation>
    <scope>NUCLEOTIDE SEQUENCE [LARGE SCALE GENOMIC DNA]</scope>
    <source>
        <strain>ATCC 204508 / S288c</strain>
    </source>
</reference>
<reference key="3">
    <citation type="journal article" date="2014" name="G3 (Bethesda)">
        <title>The reference genome sequence of Saccharomyces cerevisiae: Then and now.</title>
        <authorList>
            <person name="Engel S.R."/>
            <person name="Dietrich F.S."/>
            <person name="Fisk D.G."/>
            <person name="Binkley G."/>
            <person name="Balakrishnan R."/>
            <person name="Costanzo M.C."/>
            <person name="Dwight S.S."/>
            <person name="Hitz B.C."/>
            <person name="Karra K."/>
            <person name="Nash R.S."/>
            <person name="Weng S."/>
            <person name="Wong E.D."/>
            <person name="Lloyd P."/>
            <person name="Skrzypek M.S."/>
            <person name="Miyasato S.R."/>
            <person name="Simison M."/>
            <person name="Cherry J.M."/>
        </authorList>
    </citation>
    <scope>GENOME REANNOTATION</scope>
    <source>
        <strain>ATCC 204508 / S288c</strain>
    </source>
</reference>
<reference key="4">
    <citation type="journal article" date="1997" name="FEBS Lett.">
        <title>Mannosylphosphate transfer to cell wall mannan is regulated by the transcriptional level of the MNN4 gene in Saccharomyces cerevisiae.</title>
        <authorList>
            <person name="Odani T."/>
            <person name="Shimma Y."/>
            <person name="Wang X.H."/>
            <person name="Jigami Y."/>
        </authorList>
    </citation>
    <scope>FUNCTION</scope>
    <scope>INDUCTION</scope>
</reference>
<reference key="5">
    <citation type="journal article" date="2005" name="Fungal Genet. Biol.">
        <title>A genome-wide screen for Saccharomyces cerevisiae nonessential genes involved in mannosyl phosphate transfer to mannoprotein-linked oligosaccharides.</title>
        <authorList>
            <person name="Corbacho I."/>
            <person name="Olivero I."/>
            <person name="Hernandez L.M."/>
        </authorList>
    </citation>
    <scope>FUNCTION</scope>
</reference>
<reference key="6">
    <citation type="journal article" date="2017" name="Appl. Microbiol. Biotechnol.">
        <title>Abolishment of N-glycan mannosylphosphorylation in glyco-engineered Saccharomyces cerevisiae by double disruption of MNN4 and MNN14 genes.</title>
        <authorList>
            <person name="Kim Y.H."/>
            <person name="Kang J.Y."/>
            <person name="Gil J.Y."/>
            <person name="Kim S.Y."/>
            <person name="Shin K.K."/>
            <person name="Kang H.A."/>
            <person name="Kim J.Y."/>
            <person name="Kwon O."/>
            <person name="Oh D.B."/>
        </authorList>
    </citation>
    <scope>FUNCTION</scope>
    <scope>DISRUPTION PHENOTYPE</scope>
    <scope>BIOTECHNOLOGY</scope>
</reference>
<reference key="7">
    <citation type="journal article" date="2019" name="J. Gen. Appl. Microbiol.">
        <title>Both Svp26 and Mnn6 are required for the efficient ER exit of Mnn4 in Saccharomyces cerevisiae.</title>
        <authorList>
            <person name="Noda Y."/>
            <person name="Arai S."/>
            <person name="Wada I."/>
            <person name="Yoda K."/>
        </authorList>
    </citation>
    <scope>FUNCTION</scope>
    <scope>SUBCELLULAR LOCATION</scope>
    <scope>DOMAIN</scope>
    <scope>MUTAGENESIS OF ASP-519</scope>
</reference>
<comment type="function">
    <text evidence="3 4 5 6 7">Golgi apparatus protein involved in N-glycan mannosylphosphorylation (PubMed:15993632, PubMed:28101612, PubMed:30842360, PubMed:9023541, PubMed:9459307). While MNN4 seems to have a regulatory role in N-glycan mannosylphosphorylation, a transferase activity of MNN4 can not be ruled out (PubMed:15993632, PubMed:28101612, PubMed:30842360, PubMed:9023541, PubMed:9459307). Mediates mannosylphosphate transfer in both the core and outer chain portions of N-linked oligosaccharides (PubMed:9023541). Has partially redundant function with MNN14 (PubMed:28101612).</text>
</comment>
<comment type="subcellular location">
    <subcellularLocation>
        <location evidence="5">Golgi apparatus membrane</location>
        <topology evidence="1">Single-pass type II membrane protein</topology>
    </subcellularLocation>
    <text evidence="5">Endoplasmic reticulum exit to the Golgi apparatus requires SVP26 and MNN6.</text>
</comment>
<comment type="induction">
    <text evidence="7">Expression is increased at late logarithmic and stationary phases of cell growth (PubMed:9459307). Expression is also induced by osmotic stress (PubMed:9459307).</text>
</comment>
<comment type="domain">
    <text evidence="5">The conserved DXD motif is essential for the function, which could be an indication that MNN4 has transferase activity.</text>
</comment>
<comment type="disruption phenotype">
    <text evidence="4 6">Decreases the mannosylphosphate content in cell wall mannans (PubMed:9023541). Eliminates N-glycan mannosylphosphorylation, when its paralog MNN14 is also deleted (PubMed:28101612).</text>
</comment>
<comment type="biotechnology">
    <text evidence="4">Mannosylphosphorylated glycans are found only in fungi, including yeast, and the elimination of mannosylphosphates from glycans is a prerequisite for yeast glycoengineering to produce human-compatible glycoproteins.</text>
</comment>
<comment type="similarity">
    <text evidence="9">Belongs to the MNN4 family.</text>
</comment>
<dbReference type="EMBL" id="D83006">
    <property type="protein sequence ID" value="BAA11676.1"/>
    <property type="molecule type" value="Genomic_DNA"/>
</dbReference>
<dbReference type="EMBL" id="Z28201">
    <property type="protein sequence ID" value="CAA82046.1"/>
    <property type="molecule type" value="Genomic_DNA"/>
</dbReference>
<dbReference type="EMBL" id="Z28200">
    <property type="protein sequence ID" value="CAA82044.1"/>
    <property type="molecule type" value="Genomic_DNA"/>
</dbReference>
<dbReference type="EMBL" id="BK006944">
    <property type="protein sequence ID" value="DAA08967.1"/>
    <property type="molecule type" value="Genomic_DNA"/>
</dbReference>
<dbReference type="PIR" id="S78475">
    <property type="entry name" value="S78475"/>
</dbReference>
<dbReference type="RefSeq" id="NP_012721.1">
    <property type="nucleotide sequence ID" value="NM_001179766.1"/>
</dbReference>
<dbReference type="BioGRID" id="33921">
    <property type="interactions" value="54"/>
</dbReference>
<dbReference type="DIP" id="DIP-4199N"/>
<dbReference type="FunCoup" id="P36044">
    <property type="interactions" value="154"/>
</dbReference>
<dbReference type="IntAct" id="P36044">
    <property type="interactions" value="3"/>
</dbReference>
<dbReference type="STRING" id="4932.YKL201C"/>
<dbReference type="PaxDb" id="4932-YKL201C"/>
<dbReference type="PeptideAtlas" id="P36044"/>
<dbReference type="EnsemblFungi" id="YKL201C_mRNA">
    <property type="protein sequence ID" value="YKL201C"/>
    <property type="gene ID" value="YKL201C"/>
</dbReference>
<dbReference type="GeneID" id="853634"/>
<dbReference type="KEGG" id="sce:YKL201C"/>
<dbReference type="AGR" id="SGD:S000001684"/>
<dbReference type="SGD" id="S000001684">
    <property type="gene designation" value="MNN4"/>
</dbReference>
<dbReference type="VEuPathDB" id="FungiDB:YKL201C"/>
<dbReference type="eggNOG" id="ENOG502QREF">
    <property type="taxonomic scope" value="Eukaryota"/>
</dbReference>
<dbReference type="GeneTree" id="ENSGT00390000014471"/>
<dbReference type="HOGENOM" id="CLU_008074_0_0_1"/>
<dbReference type="InParanoid" id="P36044"/>
<dbReference type="OMA" id="PEVYQLQ"/>
<dbReference type="OrthoDB" id="444255at2759"/>
<dbReference type="BioCyc" id="MetaCyc:G3O-31961-MONOMER"/>
<dbReference type="BioCyc" id="YEAST:G3O-31961-MONOMER"/>
<dbReference type="BioGRID-ORCS" id="853634">
    <property type="hits" value="0 hits in 10 CRISPR screens"/>
</dbReference>
<dbReference type="PRO" id="PR:P36044"/>
<dbReference type="Proteomes" id="UP000002311">
    <property type="component" value="Chromosome XI"/>
</dbReference>
<dbReference type="RNAct" id="P36044">
    <property type="molecule type" value="protein"/>
</dbReference>
<dbReference type="GO" id="GO:0005794">
    <property type="term" value="C:Golgi apparatus"/>
    <property type="evidence" value="ECO:0000314"/>
    <property type="project" value="SGD"/>
</dbReference>
<dbReference type="GO" id="GO:0000139">
    <property type="term" value="C:Golgi membrane"/>
    <property type="evidence" value="ECO:0007669"/>
    <property type="project" value="UniProtKB-SubCell"/>
</dbReference>
<dbReference type="GO" id="GO:0008047">
    <property type="term" value="F:enzyme activator activity"/>
    <property type="evidence" value="ECO:0000315"/>
    <property type="project" value="SGD"/>
</dbReference>
<dbReference type="GO" id="GO:0006486">
    <property type="term" value="P:protein glycosylation"/>
    <property type="evidence" value="ECO:0000318"/>
    <property type="project" value="GO_Central"/>
</dbReference>
<dbReference type="GO" id="GO:0006487">
    <property type="term" value="P:protein N-linked glycosylation"/>
    <property type="evidence" value="ECO:0000315"/>
    <property type="project" value="SGD"/>
</dbReference>
<dbReference type="GO" id="GO:0006493">
    <property type="term" value="P:protein O-linked glycosylation"/>
    <property type="evidence" value="ECO:0000315"/>
    <property type="project" value="SGD"/>
</dbReference>
<dbReference type="InterPro" id="IPR009644">
    <property type="entry name" value="FKTN-rel"/>
</dbReference>
<dbReference type="InterPro" id="IPR007074">
    <property type="entry name" value="LicD/FKTN/FKRP_NTP_transf"/>
</dbReference>
<dbReference type="PANTHER" id="PTHR15407">
    <property type="entry name" value="FUKUTIN-RELATED"/>
    <property type="match status" value="1"/>
</dbReference>
<dbReference type="PANTHER" id="PTHR15407:SF28">
    <property type="entry name" value="RIBITOL-5-PHOSPHATE TRANSFERASE FKTN"/>
    <property type="match status" value="1"/>
</dbReference>
<dbReference type="Pfam" id="PF04991">
    <property type="entry name" value="LicD"/>
    <property type="match status" value="1"/>
</dbReference>
<gene>
    <name evidence="8" type="primary">MNN4</name>
    <name type="ordered locus">YKL201C</name>
    <name type="ORF">YKL200C</name>
</gene>
<sequence length="1178" mass="139381">MLQRISSKLHRRFLSGLLRVKHYPLRRILLPLILLQIIIITFIWSNSPQRNGLGRDADYLLPNYNELDSDDDSWYSILTSSFKNDRKIQFAKTLYENLKFGTNPKWVNEYTLQNDLLSVKMGPRKGSKLESVDELKFYDFDPRLTWSVVLNHLQNNDADQPEKLPFSWYDWTTFHELNKLISIDKTVLPCNFLFQSAFDKESLEAIETELGEPLFLYERPKYAQKLWYKAARNQDRIKDSKELKKHCSKLFTPDGHGSPKGLRFNTQFQIKELYDKVRPEVYQLQARNYILTTQSHPLSISIIESDNSTYQVPLQTEKSKNLVQSGLLQEYINDNINSTNKRKKNKQDVEFNHNRLFQEFVNNDQVNSLYKLEIEETDKFTFDKDLVYLSPSDFKFDASKKIEELEEQKKLYPDKFSAHNENYLNSLKNSVKTSPALQRKFFYEAGAVKQYKGMGFHRDKRFFNVDTLINDKQEYQARLNSMIRTFQKFTKANGIISWLSHGTLYGYLYNGMAFPWDNDFDLQMPIKHLQLLSQYFNQSLILEDPRQGNGRYFLDVSDSLTVRINGNGKNNIDARFIDVDTGLYIDITGLASTSAPSRDYLNSYIEERLQEEHLDINNIPESNGETATLPDKVDDGLVNMATLNITELRDYITSDENKNHKRVPTDTDLKDLLKKELEELPKSKTIENKLNPKQRYFLNEKLKLYNCRNNHFNSFEELSPLINTVFHGVPALIPHRHTYCLHNEYHVPDRYAFDAYKNTAYLPEFRFWFDYDGLKKCSNINSWYPNIPSINSWNPNLLKEISSTKFESKLFDSNKVSEYSFKNLSMDDVRLIYKNIPKAGFIEVFTNLYNSFNVTAYRQKELEIQYCQNLTFIEKKKLLHQLRINVAPKLSSPAKDPFLFGYEKAMWKDLSKSMNQTTLDQVTKIVHEEYVGKIIDLSESLKYRNFSLFNITFDETGTTLDDNTEDYTPANTVEVNPVDFKSNLNFSSNSFLDLNSYGLDLFAPTLSDVNRKGIQMFDKDPIIVYEDYAYAKLLEERKRREKKKKEEEEKKKKEEEEKKKKEEEEKKKKEEEEKKKKEEEEKKKKEEEEKKKQEEEEKKKKEEEEKKKQEEGEKMKNEDEENKKNEDEEKKKNEEEEKKKQEEKNKKNEDEEKKKQEEEEKKKNEEEEKKKQEEGHSN</sequence>
<accession>P36044</accession>
<accession>D6VX01</accession>
<accession>P36043</accession>
<accession>P89095</accession>
<name>MNN4_YEAST</name>
<protein>
    <recommendedName>
        <fullName evidence="8">Mannosyltransferase regulator 4</fullName>
    </recommendedName>
</protein>
<keyword id="KW-0333">Golgi apparatus</keyword>
<keyword id="KW-0472">Membrane</keyword>
<keyword id="KW-1185">Reference proteome</keyword>
<keyword id="KW-0677">Repeat</keyword>
<keyword id="KW-0735">Signal-anchor</keyword>
<keyword id="KW-0812">Transmembrane</keyword>
<keyword id="KW-1133">Transmembrane helix</keyword>
<evidence type="ECO:0000255" key="1"/>
<evidence type="ECO:0000256" key="2">
    <source>
        <dbReference type="SAM" id="MobiDB-lite"/>
    </source>
</evidence>
<evidence type="ECO:0000269" key="3">
    <source>
    </source>
</evidence>
<evidence type="ECO:0000269" key="4">
    <source>
    </source>
</evidence>
<evidence type="ECO:0000269" key="5">
    <source>
    </source>
</evidence>
<evidence type="ECO:0000269" key="6">
    <source>
    </source>
</evidence>
<evidence type="ECO:0000269" key="7">
    <source>
    </source>
</evidence>
<evidence type="ECO:0000303" key="8">
    <source>
    </source>
</evidence>
<evidence type="ECO:0000305" key="9"/>
<feature type="chain" id="PRO_0000096525" description="Mannosyltransferase regulator 4">
    <location>
        <begin position="1"/>
        <end position="1178"/>
    </location>
</feature>
<feature type="topological domain" description="Cytoplasmic" evidence="1">
    <location>
        <begin position="1"/>
        <end position="27"/>
    </location>
</feature>
<feature type="transmembrane region" description="Helical; Signal-anchor for type II membrane protein" evidence="1">
    <location>
        <begin position="28"/>
        <end position="48"/>
    </location>
</feature>
<feature type="topological domain" description="Lumenal" evidence="1">
    <location>
        <begin position="49"/>
        <end position="1178"/>
    </location>
</feature>
<feature type="repeat" description="1">
    <location>
        <begin position="1042"/>
        <end position="1049"/>
    </location>
</feature>
<feature type="repeat" description="2">
    <location>
        <begin position="1050"/>
        <end position="1057"/>
    </location>
</feature>
<feature type="repeat" description="3">
    <location>
        <begin position="1058"/>
        <end position="1065"/>
    </location>
</feature>
<feature type="repeat" description="4">
    <location>
        <begin position="1066"/>
        <end position="1073"/>
    </location>
</feature>
<feature type="repeat" description="5">
    <location>
        <begin position="1074"/>
        <end position="1081"/>
    </location>
</feature>
<feature type="repeat" description="6">
    <location>
        <begin position="1082"/>
        <end position="1089"/>
    </location>
</feature>
<feature type="repeat" description="7; approximate">
    <location>
        <begin position="1090"/>
        <end position="1097"/>
    </location>
</feature>
<feature type="repeat" description="8">
    <location>
        <begin position="1098"/>
        <end position="1105"/>
    </location>
</feature>
<feature type="repeat" description="9; approximate">
    <location>
        <begin position="1106"/>
        <end position="1113"/>
    </location>
</feature>
<feature type="repeat" description="10; approximate">
    <location>
        <begin position="1114"/>
        <end position="1121"/>
    </location>
</feature>
<feature type="repeat" description="11; approximate">
    <location>
        <begin position="1122"/>
        <end position="1129"/>
    </location>
</feature>
<feature type="repeat" description="12">
    <location>
        <begin position="1130"/>
        <end position="1137"/>
    </location>
</feature>
<feature type="repeat" description="13; approximate">
    <location>
        <begin position="1138"/>
        <end position="1144"/>
    </location>
</feature>
<feature type="repeat" description="14; approximate">
    <location>
        <begin position="1145"/>
        <end position="1152"/>
    </location>
</feature>
<feature type="repeat" description="15; approximate">
    <location>
        <begin position="1153"/>
        <end position="1160"/>
    </location>
</feature>
<feature type="repeat" description="16; approximate">
    <location>
        <begin position="1161"/>
        <end position="1168"/>
    </location>
</feature>
<feature type="repeat" description="17; truncated">
    <location>
        <begin position="1169"/>
        <end position="1174"/>
    </location>
</feature>
<feature type="region of interest" description="Disordered" evidence="2">
    <location>
        <begin position="1041"/>
        <end position="1178"/>
    </location>
</feature>
<feature type="region of interest" description="17 X 8 AA tandem repeats of K-K-K-K-E-E-E-E">
    <location>
        <begin position="1042"/>
        <end position="1174"/>
    </location>
</feature>
<feature type="short sequence motif" description="DXD" evidence="5">
    <location>
        <begin position="519"/>
        <end position="521"/>
    </location>
</feature>
<feature type="mutagenesis site" description="Impaired the function." evidence="5">
    <original>D</original>
    <variation>A</variation>
    <location>
        <position position="519"/>
    </location>
</feature>
<proteinExistence type="evidence at protein level"/>
<organism>
    <name type="scientific">Saccharomyces cerevisiae (strain ATCC 204508 / S288c)</name>
    <name type="common">Baker's yeast</name>
    <dbReference type="NCBI Taxonomy" id="559292"/>
    <lineage>
        <taxon>Eukaryota</taxon>
        <taxon>Fungi</taxon>
        <taxon>Dikarya</taxon>
        <taxon>Ascomycota</taxon>
        <taxon>Saccharomycotina</taxon>
        <taxon>Saccharomycetes</taxon>
        <taxon>Saccharomycetales</taxon>
        <taxon>Saccharomycetaceae</taxon>
        <taxon>Saccharomyces</taxon>
    </lineage>
</organism>